<accession>A6Q228</accession>
<feature type="chain" id="PRO_1000064738" description="Ribosome maturation factor RimP">
    <location>
        <begin position="1"/>
        <end position="142"/>
    </location>
</feature>
<dbReference type="EMBL" id="AP009178">
    <property type="protein sequence ID" value="BAF69537.1"/>
    <property type="molecule type" value="Genomic_DNA"/>
</dbReference>
<dbReference type="RefSeq" id="WP_012081800.1">
    <property type="nucleotide sequence ID" value="NC_009662.1"/>
</dbReference>
<dbReference type="SMR" id="A6Q228"/>
<dbReference type="FunCoup" id="A6Q228">
    <property type="interactions" value="289"/>
</dbReference>
<dbReference type="STRING" id="387092.NIS_0423"/>
<dbReference type="KEGG" id="nis:NIS_0423"/>
<dbReference type="eggNOG" id="COG0779">
    <property type="taxonomic scope" value="Bacteria"/>
</dbReference>
<dbReference type="HOGENOM" id="CLU_070525_2_2_7"/>
<dbReference type="InParanoid" id="A6Q228"/>
<dbReference type="OrthoDB" id="9805006at2"/>
<dbReference type="Proteomes" id="UP000001118">
    <property type="component" value="Chromosome"/>
</dbReference>
<dbReference type="GO" id="GO:0005829">
    <property type="term" value="C:cytosol"/>
    <property type="evidence" value="ECO:0007669"/>
    <property type="project" value="TreeGrafter"/>
</dbReference>
<dbReference type="GO" id="GO:0000028">
    <property type="term" value="P:ribosomal small subunit assembly"/>
    <property type="evidence" value="ECO:0007669"/>
    <property type="project" value="TreeGrafter"/>
</dbReference>
<dbReference type="GO" id="GO:0006412">
    <property type="term" value="P:translation"/>
    <property type="evidence" value="ECO:0007669"/>
    <property type="project" value="TreeGrafter"/>
</dbReference>
<dbReference type="CDD" id="cd01734">
    <property type="entry name" value="YlxS_C"/>
    <property type="match status" value="1"/>
</dbReference>
<dbReference type="Gene3D" id="2.30.30.180">
    <property type="entry name" value="Ribosome maturation factor RimP, C-terminal domain"/>
    <property type="match status" value="1"/>
</dbReference>
<dbReference type="Gene3D" id="3.30.300.70">
    <property type="entry name" value="RimP-like superfamily, N-terminal"/>
    <property type="match status" value="1"/>
</dbReference>
<dbReference type="HAMAP" id="MF_01077">
    <property type="entry name" value="RimP"/>
    <property type="match status" value="1"/>
</dbReference>
<dbReference type="InterPro" id="IPR003728">
    <property type="entry name" value="Ribosome_maturation_RimP"/>
</dbReference>
<dbReference type="InterPro" id="IPR028998">
    <property type="entry name" value="RimP_C"/>
</dbReference>
<dbReference type="InterPro" id="IPR036847">
    <property type="entry name" value="RimP_C_sf"/>
</dbReference>
<dbReference type="InterPro" id="IPR028989">
    <property type="entry name" value="RimP_N"/>
</dbReference>
<dbReference type="InterPro" id="IPR035956">
    <property type="entry name" value="RimP_N_sf"/>
</dbReference>
<dbReference type="NCBIfam" id="NF000936">
    <property type="entry name" value="PRK00092.4-1"/>
    <property type="match status" value="1"/>
</dbReference>
<dbReference type="PANTHER" id="PTHR33867">
    <property type="entry name" value="RIBOSOME MATURATION FACTOR RIMP"/>
    <property type="match status" value="1"/>
</dbReference>
<dbReference type="PANTHER" id="PTHR33867:SF1">
    <property type="entry name" value="RIBOSOME MATURATION FACTOR RIMP"/>
    <property type="match status" value="1"/>
</dbReference>
<dbReference type="Pfam" id="PF17384">
    <property type="entry name" value="DUF150_C"/>
    <property type="match status" value="1"/>
</dbReference>
<dbReference type="Pfam" id="PF02576">
    <property type="entry name" value="RimP_N"/>
    <property type="match status" value="1"/>
</dbReference>
<dbReference type="SUPFAM" id="SSF74942">
    <property type="entry name" value="YhbC-like, C-terminal domain"/>
    <property type="match status" value="1"/>
</dbReference>
<dbReference type="SUPFAM" id="SSF75420">
    <property type="entry name" value="YhbC-like, N-terminal domain"/>
    <property type="match status" value="1"/>
</dbReference>
<sequence length="142" mass="15894">MSLEQEIKQIVESCGAKLYDIETVSDRGKTIYRVTITAPEGVDLQKCVEISNLISPLLDVHPPVSGDYNLEVSSPGVERKLKKPSHFEHSVGEKVRVTKNDGETIEGVLSDFRDHTLTLQTKNGPIEIPLDQITYAKTIFEW</sequence>
<proteinExistence type="inferred from homology"/>
<comment type="function">
    <text evidence="1">Required for maturation of 30S ribosomal subunits.</text>
</comment>
<comment type="subcellular location">
    <subcellularLocation>
        <location evidence="1">Cytoplasm</location>
    </subcellularLocation>
</comment>
<comment type="similarity">
    <text evidence="1">Belongs to the RimP family.</text>
</comment>
<protein>
    <recommendedName>
        <fullName evidence="1">Ribosome maturation factor RimP</fullName>
    </recommendedName>
</protein>
<reference key="1">
    <citation type="journal article" date="2007" name="Proc. Natl. Acad. Sci. U.S.A.">
        <title>Deep-sea vent epsilon-proteobacterial genomes provide insights into emergence of pathogens.</title>
        <authorList>
            <person name="Nakagawa S."/>
            <person name="Takaki Y."/>
            <person name="Shimamura S."/>
            <person name="Reysenbach A.-L."/>
            <person name="Takai K."/>
            <person name="Horikoshi K."/>
        </authorList>
    </citation>
    <scope>NUCLEOTIDE SEQUENCE [LARGE SCALE GENOMIC DNA]</scope>
    <source>
        <strain>SB155-2</strain>
    </source>
</reference>
<name>RIMP_NITSB</name>
<gene>
    <name evidence="1" type="primary">rimP</name>
    <name type="ordered locus">NIS_0423</name>
</gene>
<organism>
    <name type="scientific">Nitratiruptor sp. (strain SB155-2)</name>
    <dbReference type="NCBI Taxonomy" id="387092"/>
    <lineage>
        <taxon>Bacteria</taxon>
        <taxon>Pseudomonadati</taxon>
        <taxon>Campylobacterota</taxon>
        <taxon>Epsilonproteobacteria</taxon>
        <taxon>Nautiliales</taxon>
        <taxon>Nitratiruptoraceae</taxon>
        <taxon>Nitratiruptor</taxon>
    </lineage>
</organism>
<keyword id="KW-0963">Cytoplasm</keyword>
<keyword id="KW-1185">Reference proteome</keyword>
<keyword id="KW-0690">Ribosome biogenesis</keyword>
<evidence type="ECO:0000255" key="1">
    <source>
        <dbReference type="HAMAP-Rule" id="MF_01077"/>
    </source>
</evidence>